<protein>
    <recommendedName>
        <fullName evidence="1">Beta-galactosidase</fullName>
        <shortName evidence="1">Beta-gal</shortName>
        <ecNumber evidence="1">3.2.1.23</ecNumber>
    </recommendedName>
    <alternativeName>
        <fullName evidence="1">Lactase</fullName>
    </alternativeName>
</protein>
<organism>
    <name type="scientific">Escherichia coli O157:H7</name>
    <dbReference type="NCBI Taxonomy" id="83334"/>
    <lineage>
        <taxon>Bacteria</taxon>
        <taxon>Pseudomonadati</taxon>
        <taxon>Pseudomonadota</taxon>
        <taxon>Gammaproteobacteria</taxon>
        <taxon>Enterobacterales</taxon>
        <taxon>Enterobacteriaceae</taxon>
        <taxon>Escherichia</taxon>
    </lineage>
</organism>
<comment type="catalytic activity">
    <reaction evidence="1">
        <text>Hydrolysis of terminal non-reducing beta-D-galactose residues in beta-D-galactosides.</text>
        <dbReference type="EC" id="3.2.1.23"/>
    </reaction>
</comment>
<comment type="cofactor">
    <cofactor evidence="1">
        <name>Mg(2+)</name>
        <dbReference type="ChEBI" id="CHEBI:18420"/>
    </cofactor>
    <text evidence="1">Binds 2 magnesium ions per monomer.</text>
</comment>
<comment type="cofactor">
    <cofactor evidence="1">
        <name>Na(+)</name>
        <dbReference type="ChEBI" id="CHEBI:29101"/>
    </cofactor>
    <text evidence="1">Binds 1 sodium ion per monomer.</text>
</comment>
<comment type="subunit">
    <text evidence="1">Homotetramer.</text>
</comment>
<comment type="similarity">
    <text evidence="1">Belongs to the glycosyl hydrolase 2 family.</text>
</comment>
<feature type="chain" id="PRO_0000366993" description="Beta-galactosidase">
    <location>
        <begin position="1"/>
        <end position="1024"/>
    </location>
</feature>
<feature type="active site" description="Proton donor" evidence="1">
    <location>
        <position position="462"/>
    </location>
</feature>
<feature type="active site" description="Nucleophile" evidence="1">
    <location>
        <position position="538"/>
    </location>
</feature>
<feature type="binding site" evidence="1">
    <location>
        <position position="103"/>
    </location>
    <ligand>
        <name>substrate</name>
    </ligand>
</feature>
<feature type="binding site" evidence="1">
    <location>
        <position position="202"/>
    </location>
    <ligand>
        <name>Na(+)</name>
        <dbReference type="ChEBI" id="CHEBI:29101"/>
    </ligand>
</feature>
<feature type="binding site" evidence="1">
    <location>
        <position position="202"/>
    </location>
    <ligand>
        <name>substrate</name>
    </ligand>
</feature>
<feature type="binding site" evidence="1">
    <location>
        <position position="417"/>
    </location>
    <ligand>
        <name>Mg(2+)</name>
        <dbReference type="ChEBI" id="CHEBI:18420"/>
        <label>1</label>
    </ligand>
</feature>
<feature type="binding site" evidence="1">
    <location>
        <position position="419"/>
    </location>
    <ligand>
        <name>Mg(2+)</name>
        <dbReference type="ChEBI" id="CHEBI:18420"/>
        <label>1</label>
    </ligand>
</feature>
<feature type="binding site" evidence="1">
    <location>
        <position position="462"/>
    </location>
    <ligand>
        <name>Mg(2+)</name>
        <dbReference type="ChEBI" id="CHEBI:18420"/>
        <label>1</label>
    </ligand>
</feature>
<feature type="binding site" evidence="1">
    <location>
        <position position="462"/>
    </location>
    <ligand>
        <name>substrate</name>
    </ligand>
</feature>
<feature type="binding site" evidence="1">
    <location>
        <begin position="538"/>
        <end position="541"/>
    </location>
    <ligand>
        <name>substrate</name>
    </ligand>
</feature>
<feature type="binding site" evidence="1">
    <location>
        <position position="598"/>
    </location>
    <ligand>
        <name>Mg(2+)</name>
        <dbReference type="ChEBI" id="CHEBI:18420"/>
        <label>2</label>
    </ligand>
</feature>
<feature type="binding site" evidence="1">
    <location>
        <position position="602"/>
    </location>
    <ligand>
        <name>Na(+)</name>
        <dbReference type="ChEBI" id="CHEBI:29101"/>
    </ligand>
</feature>
<feature type="binding site" evidence="1">
    <location>
        <position position="605"/>
    </location>
    <ligand>
        <name>Na(+)</name>
        <dbReference type="ChEBI" id="CHEBI:29101"/>
    </ligand>
</feature>
<feature type="binding site" evidence="1">
    <location>
        <position position="605"/>
    </location>
    <ligand>
        <name>substrate</name>
    </ligand>
</feature>
<feature type="binding site" evidence="1">
    <location>
        <position position="1000"/>
    </location>
    <ligand>
        <name>substrate</name>
    </ligand>
</feature>
<feature type="site" description="Transition state stabilizer" evidence="1">
    <location>
        <position position="358"/>
    </location>
</feature>
<feature type="site" description="Transition state stabilizer" evidence="1">
    <location>
        <position position="392"/>
    </location>
</feature>
<accession>Q8X685</accession>
<accession>Q7AH58</accession>
<name>BGAL_ECO57</name>
<keyword id="KW-0326">Glycosidase</keyword>
<keyword id="KW-0378">Hydrolase</keyword>
<keyword id="KW-0460">Magnesium</keyword>
<keyword id="KW-0479">Metal-binding</keyword>
<keyword id="KW-1185">Reference proteome</keyword>
<keyword id="KW-0915">Sodium</keyword>
<dbReference type="EC" id="3.2.1.23" evidence="1"/>
<dbReference type="EMBL" id="AE005174">
    <property type="protein sequence ID" value="AAG54693.1"/>
    <property type="molecule type" value="Genomic_DNA"/>
</dbReference>
<dbReference type="EMBL" id="BA000007">
    <property type="protein sequence ID" value="BAB33820.1"/>
    <property type="molecule type" value="Genomic_DNA"/>
</dbReference>
<dbReference type="PIR" id="A85529">
    <property type="entry name" value="A85529"/>
</dbReference>
<dbReference type="PIR" id="E90678">
    <property type="entry name" value="E90678"/>
</dbReference>
<dbReference type="RefSeq" id="NP_308424.1">
    <property type="nucleotide sequence ID" value="NC_002695.1"/>
</dbReference>
<dbReference type="RefSeq" id="WP_000177948.1">
    <property type="nucleotide sequence ID" value="NZ_VOAI01000005.1"/>
</dbReference>
<dbReference type="SMR" id="Q8X685"/>
<dbReference type="STRING" id="155864.Z0440"/>
<dbReference type="CAZy" id="GH2">
    <property type="family name" value="Glycoside Hydrolase Family 2"/>
</dbReference>
<dbReference type="GeneID" id="914499"/>
<dbReference type="KEGG" id="ece:Z0440"/>
<dbReference type="KEGG" id="ecs:ECs_0397"/>
<dbReference type="PATRIC" id="fig|386585.9.peg.492"/>
<dbReference type="eggNOG" id="COG3250">
    <property type="taxonomic scope" value="Bacteria"/>
</dbReference>
<dbReference type="HOGENOM" id="CLU_002346_0_2_6"/>
<dbReference type="Proteomes" id="UP000000558">
    <property type="component" value="Chromosome"/>
</dbReference>
<dbReference type="Proteomes" id="UP000002519">
    <property type="component" value="Chromosome"/>
</dbReference>
<dbReference type="GO" id="GO:0009341">
    <property type="term" value="C:beta-galactosidase complex"/>
    <property type="evidence" value="ECO:0007669"/>
    <property type="project" value="InterPro"/>
</dbReference>
<dbReference type="GO" id="GO:0004565">
    <property type="term" value="F:beta-galactosidase activity"/>
    <property type="evidence" value="ECO:0007669"/>
    <property type="project" value="UniProtKB-EC"/>
</dbReference>
<dbReference type="GO" id="GO:0030246">
    <property type="term" value="F:carbohydrate binding"/>
    <property type="evidence" value="ECO:0007669"/>
    <property type="project" value="InterPro"/>
</dbReference>
<dbReference type="GO" id="GO:0000287">
    <property type="term" value="F:magnesium ion binding"/>
    <property type="evidence" value="ECO:0007669"/>
    <property type="project" value="UniProtKB-UniRule"/>
</dbReference>
<dbReference type="GO" id="GO:0005990">
    <property type="term" value="P:lactose catabolic process"/>
    <property type="evidence" value="ECO:0007669"/>
    <property type="project" value="TreeGrafter"/>
</dbReference>
<dbReference type="FunFam" id="2.60.120.260:FF:000058">
    <property type="entry name" value="Beta-galactosidase"/>
    <property type="match status" value="1"/>
</dbReference>
<dbReference type="FunFam" id="2.60.40.10:FF:000680">
    <property type="entry name" value="Beta-galactosidase"/>
    <property type="match status" value="1"/>
</dbReference>
<dbReference type="FunFam" id="2.60.40.10:FF:000850">
    <property type="entry name" value="Beta-galactosidase"/>
    <property type="match status" value="1"/>
</dbReference>
<dbReference type="FunFam" id="2.70.98.10:FF:000006">
    <property type="entry name" value="Beta-galactosidase"/>
    <property type="match status" value="1"/>
</dbReference>
<dbReference type="FunFam" id="3.20.20.80:FF:000018">
    <property type="entry name" value="Beta-galactosidase"/>
    <property type="match status" value="1"/>
</dbReference>
<dbReference type="Gene3D" id="2.70.98.10">
    <property type="match status" value="1"/>
</dbReference>
<dbReference type="Gene3D" id="2.60.120.260">
    <property type="entry name" value="Galactose-binding domain-like"/>
    <property type="match status" value="1"/>
</dbReference>
<dbReference type="Gene3D" id="3.20.20.80">
    <property type="entry name" value="Glycosidases"/>
    <property type="match status" value="1"/>
</dbReference>
<dbReference type="Gene3D" id="2.60.40.10">
    <property type="entry name" value="Immunoglobulins"/>
    <property type="match status" value="2"/>
</dbReference>
<dbReference type="HAMAP" id="MF_01687">
    <property type="entry name" value="Beta_gal"/>
    <property type="match status" value="1"/>
</dbReference>
<dbReference type="InterPro" id="IPR004199">
    <property type="entry name" value="B-gal_small/dom_5"/>
</dbReference>
<dbReference type="InterPro" id="IPR050347">
    <property type="entry name" value="Bact_Beta-galactosidase"/>
</dbReference>
<dbReference type="InterPro" id="IPR036156">
    <property type="entry name" value="Beta-gal/glucu_dom_sf"/>
</dbReference>
<dbReference type="InterPro" id="IPR011013">
    <property type="entry name" value="Gal_mutarotase_sf_dom"/>
</dbReference>
<dbReference type="InterPro" id="IPR008979">
    <property type="entry name" value="Galactose-bd-like_sf"/>
</dbReference>
<dbReference type="InterPro" id="IPR014718">
    <property type="entry name" value="GH-type_carb-bd"/>
</dbReference>
<dbReference type="InterPro" id="IPR006101">
    <property type="entry name" value="Glyco_hydro_2"/>
</dbReference>
<dbReference type="InterPro" id="IPR023232">
    <property type="entry name" value="Glyco_hydro_2_AS"/>
</dbReference>
<dbReference type="InterPro" id="IPR023933">
    <property type="entry name" value="Glyco_hydro_2_beta_Galsidase"/>
</dbReference>
<dbReference type="InterPro" id="IPR006103">
    <property type="entry name" value="Glyco_hydro_2_cat"/>
</dbReference>
<dbReference type="InterPro" id="IPR023230">
    <property type="entry name" value="Glyco_hydro_2_CS"/>
</dbReference>
<dbReference type="InterPro" id="IPR006102">
    <property type="entry name" value="Glyco_hydro_2_Ig-like"/>
</dbReference>
<dbReference type="InterPro" id="IPR006104">
    <property type="entry name" value="Glyco_hydro_2_N"/>
</dbReference>
<dbReference type="InterPro" id="IPR017853">
    <property type="entry name" value="Glycoside_hydrolase_SF"/>
</dbReference>
<dbReference type="InterPro" id="IPR013783">
    <property type="entry name" value="Ig-like_fold"/>
</dbReference>
<dbReference type="InterPro" id="IPR032312">
    <property type="entry name" value="LacZ_4"/>
</dbReference>
<dbReference type="NCBIfam" id="NF007074">
    <property type="entry name" value="PRK09525.1"/>
    <property type="match status" value="1"/>
</dbReference>
<dbReference type="PANTHER" id="PTHR46323">
    <property type="entry name" value="BETA-GALACTOSIDASE"/>
    <property type="match status" value="1"/>
</dbReference>
<dbReference type="PANTHER" id="PTHR46323:SF2">
    <property type="entry name" value="BETA-GALACTOSIDASE"/>
    <property type="match status" value="1"/>
</dbReference>
<dbReference type="Pfam" id="PF02929">
    <property type="entry name" value="Bgal_small_N"/>
    <property type="match status" value="1"/>
</dbReference>
<dbReference type="Pfam" id="PF00703">
    <property type="entry name" value="Glyco_hydro_2"/>
    <property type="match status" value="1"/>
</dbReference>
<dbReference type="Pfam" id="PF02836">
    <property type="entry name" value="Glyco_hydro_2_C"/>
    <property type="match status" value="1"/>
</dbReference>
<dbReference type="Pfam" id="PF02837">
    <property type="entry name" value="Glyco_hydro_2_N"/>
    <property type="match status" value="1"/>
</dbReference>
<dbReference type="Pfam" id="PF16353">
    <property type="entry name" value="LacZ_4"/>
    <property type="match status" value="1"/>
</dbReference>
<dbReference type="PRINTS" id="PR00132">
    <property type="entry name" value="GLHYDRLASE2"/>
</dbReference>
<dbReference type="SMART" id="SM01038">
    <property type="entry name" value="Bgal_small_N"/>
    <property type="match status" value="1"/>
</dbReference>
<dbReference type="SUPFAM" id="SSF51445">
    <property type="entry name" value="(Trans)glycosidases"/>
    <property type="match status" value="1"/>
</dbReference>
<dbReference type="SUPFAM" id="SSF49303">
    <property type="entry name" value="beta-Galactosidase/glucuronidase domain"/>
    <property type="match status" value="2"/>
</dbReference>
<dbReference type="SUPFAM" id="SSF74650">
    <property type="entry name" value="Galactose mutarotase-like"/>
    <property type="match status" value="1"/>
</dbReference>
<dbReference type="SUPFAM" id="SSF49785">
    <property type="entry name" value="Galactose-binding domain-like"/>
    <property type="match status" value="1"/>
</dbReference>
<dbReference type="PROSITE" id="PS00719">
    <property type="entry name" value="GLYCOSYL_HYDROL_F2_1"/>
    <property type="match status" value="1"/>
</dbReference>
<dbReference type="PROSITE" id="PS00608">
    <property type="entry name" value="GLYCOSYL_HYDROL_F2_2"/>
    <property type="match status" value="1"/>
</dbReference>
<sequence>MTMITDSLAVVLQRRDWENPGVTQLNRLAAHPPFASWRNSEEARTNRPSQQLRSLNGEWQFVWFPAPEAVPESWLECDLPDADTVVVPSNWQMHGYDAPIYTNVTYPITVNPPFVPTENPTGCYSLTFNVDESWLQEGQTRIIFDGVNSAFHLWCNGRWVGYGQDSRLLSEFDLSAFLRAGENRLAVMVLRWSDGSYLEDQDMWRMSGIFRDVSLLHKPTTQISDFHVATLFNDDFSRAVLEAEVQMYGELRDELRVTVSLWQGETQVASGTAPFGGEIIDERGGYADRVTLGLNVENPKLWSAEIPNIYRAVVELHTADGTLIEAEACDVGFREVRIENGLLLLNGKPLLIRGVNRHEHHPLHGQVMDEQTMVQDILLMKQNNFNAVRCSHYPNHPLWYTLCDRYGLYVVDEANIETHGMVPMNRLTDDPRWLPAMSERVTRMVQRDRNHPSVIIWSLGNESGHGANHDALYRWIKSVDPSRPVQYEGGGADTSATDIICPMYARVDEDQPFPAVPKWSIKKWLSLPGEMRPLILCEYAHAMGNSLGGFAKYWQAFRQYPRLQGGFVWDLVDQSLIKYDENGNPWSAYGGDFGDTPNDRQFCMNGLVFADRTPHPALTEAKHQQQFFQFRLSGRTIEVTSEYLFRHSDNELLHWTVALDGKPLASGEVPLDVAPQGKQVIELPELPRLESTGQLWLTVHVVQPNATAWSEAGHISAWQQWRLAENLSVTLPSAPHAIPQLTTSETDFCIELDNKRWQFNRQSGFLSQMWIGDKKQLLTPLRDQFTRAPLDNDIGVSEATRIDPNAWVERWKAAGHYQAEAALLQCTADTLADAVLITTVHAWQHQGKTLFISRKTYRIDGSGQMAITVDVEVASDTPHPARIGLTCQLAQVAERVNWLGLGPQENYPDRLTAACFDRWDLPLSDMYTPYVFPSENGLRCGTRELNYGPHQWRGDFQFNISRYSQQQLMETSHRHLLHAEEGTWLNIDGFHMGIGGDDSWSPSVSAEFQLSAGRYHYQLVWCQK</sequence>
<proteinExistence type="inferred from homology"/>
<evidence type="ECO:0000255" key="1">
    <source>
        <dbReference type="HAMAP-Rule" id="MF_01687"/>
    </source>
</evidence>
<reference key="1">
    <citation type="journal article" date="2001" name="Nature">
        <title>Genome sequence of enterohaemorrhagic Escherichia coli O157:H7.</title>
        <authorList>
            <person name="Perna N.T."/>
            <person name="Plunkett G. III"/>
            <person name="Burland V."/>
            <person name="Mau B."/>
            <person name="Glasner J.D."/>
            <person name="Rose D.J."/>
            <person name="Mayhew G.F."/>
            <person name="Evans P.S."/>
            <person name="Gregor J."/>
            <person name="Kirkpatrick H.A."/>
            <person name="Posfai G."/>
            <person name="Hackett J."/>
            <person name="Klink S."/>
            <person name="Boutin A."/>
            <person name="Shao Y."/>
            <person name="Miller L."/>
            <person name="Grotbeck E.J."/>
            <person name="Davis N.W."/>
            <person name="Lim A."/>
            <person name="Dimalanta E.T."/>
            <person name="Potamousis K."/>
            <person name="Apodaca J."/>
            <person name="Anantharaman T.S."/>
            <person name="Lin J."/>
            <person name="Yen G."/>
            <person name="Schwartz D.C."/>
            <person name="Welch R.A."/>
            <person name="Blattner F.R."/>
        </authorList>
    </citation>
    <scope>NUCLEOTIDE SEQUENCE [LARGE SCALE GENOMIC DNA]</scope>
    <source>
        <strain>O157:H7 / EDL933 / ATCC 700927 / EHEC</strain>
    </source>
</reference>
<reference key="2">
    <citation type="journal article" date="2001" name="DNA Res.">
        <title>Complete genome sequence of enterohemorrhagic Escherichia coli O157:H7 and genomic comparison with a laboratory strain K-12.</title>
        <authorList>
            <person name="Hayashi T."/>
            <person name="Makino K."/>
            <person name="Ohnishi M."/>
            <person name="Kurokawa K."/>
            <person name="Ishii K."/>
            <person name="Yokoyama K."/>
            <person name="Han C.-G."/>
            <person name="Ohtsubo E."/>
            <person name="Nakayama K."/>
            <person name="Murata T."/>
            <person name="Tanaka M."/>
            <person name="Tobe T."/>
            <person name="Iida T."/>
            <person name="Takami H."/>
            <person name="Honda T."/>
            <person name="Sasakawa C."/>
            <person name="Ogasawara N."/>
            <person name="Yasunaga T."/>
            <person name="Kuhara S."/>
            <person name="Shiba T."/>
            <person name="Hattori M."/>
            <person name="Shinagawa H."/>
        </authorList>
    </citation>
    <scope>NUCLEOTIDE SEQUENCE [LARGE SCALE GENOMIC DNA]</scope>
    <source>
        <strain>O157:H7 / Sakai / RIMD 0509952 / EHEC</strain>
    </source>
</reference>
<gene>
    <name evidence="1" type="primary">lacZ</name>
    <name type="ordered locus">Z0440</name>
    <name type="ordered locus">ECs0397</name>
</gene>